<gene>
    <name evidence="1" type="primary">hisF</name>
    <name type="ordered locus">UTI89_C2298</name>
</gene>
<feature type="chain" id="PRO_1000063059" description="Imidazole glycerol phosphate synthase subunit HisF">
    <location>
        <begin position="1"/>
        <end position="258"/>
    </location>
</feature>
<feature type="active site" evidence="1">
    <location>
        <position position="11"/>
    </location>
</feature>
<feature type="active site" evidence="1">
    <location>
        <position position="130"/>
    </location>
</feature>
<protein>
    <recommendedName>
        <fullName evidence="1">Imidazole glycerol phosphate synthase subunit HisF</fullName>
        <ecNumber evidence="1">4.3.2.10</ecNumber>
    </recommendedName>
    <alternativeName>
        <fullName evidence="1">IGP synthase cyclase subunit</fullName>
    </alternativeName>
    <alternativeName>
        <fullName evidence="1">IGP synthase subunit HisF</fullName>
    </alternativeName>
    <alternativeName>
        <fullName evidence="1">ImGP synthase subunit HisF</fullName>
        <shortName evidence="1">IGPS subunit HisF</shortName>
    </alternativeName>
</protein>
<sequence length="258" mass="28454">MLAKRIIPCLDVRDGQVVKGVQFRNHEIIGDIVPLAKRYAEEGADELVFYDITASSDGRVVDKSWVSRVAEVIDIPFCVAGGIKSLEDAAKILSFGADKISINSPALADPTLITRLADRFGVQCIVVGIDTWYDAETGKYHVNQYTGDESRTRVTQWETLDWVQEVQKRGAGEIVLNMMNQDGVRNGYDLKQLKKVREVCHVPLIASGGAGTMEHFLEAFRDADVDGALAASVFHKQIINIGELKAYLATQGVEIRIC</sequence>
<reference key="1">
    <citation type="journal article" date="2006" name="Proc. Natl. Acad. Sci. U.S.A.">
        <title>Identification of genes subject to positive selection in uropathogenic strains of Escherichia coli: a comparative genomics approach.</title>
        <authorList>
            <person name="Chen S.L."/>
            <person name="Hung C.-S."/>
            <person name="Xu J."/>
            <person name="Reigstad C.S."/>
            <person name="Magrini V."/>
            <person name="Sabo A."/>
            <person name="Blasiar D."/>
            <person name="Bieri T."/>
            <person name="Meyer R.R."/>
            <person name="Ozersky P."/>
            <person name="Armstrong J.R."/>
            <person name="Fulton R.S."/>
            <person name="Latreille J.P."/>
            <person name="Spieth J."/>
            <person name="Hooton T.M."/>
            <person name="Mardis E.R."/>
            <person name="Hultgren S.J."/>
            <person name="Gordon J.I."/>
        </authorList>
    </citation>
    <scope>NUCLEOTIDE SEQUENCE [LARGE SCALE GENOMIC DNA]</scope>
    <source>
        <strain>UTI89 / UPEC</strain>
    </source>
</reference>
<comment type="function">
    <text evidence="1">IGPS catalyzes the conversion of PRFAR and glutamine to IGP, AICAR and glutamate. The HisF subunit catalyzes the cyclization activity that produces IGP and AICAR from PRFAR using the ammonia provided by the HisH subunit.</text>
</comment>
<comment type="catalytic activity">
    <reaction evidence="1">
        <text>5-[(5-phospho-1-deoxy-D-ribulos-1-ylimino)methylamino]-1-(5-phospho-beta-D-ribosyl)imidazole-4-carboxamide + L-glutamine = D-erythro-1-(imidazol-4-yl)glycerol 3-phosphate + 5-amino-1-(5-phospho-beta-D-ribosyl)imidazole-4-carboxamide + L-glutamate + H(+)</text>
        <dbReference type="Rhea" id="RHEA:24793"/>
        <dbReference type="ChEBI" id="CHEBI:15378"/>
        <dbReference type="ChEBI" id="CHEBI:29985"/>
        <dbReference type="ChEBI" id="CHEBI:58278"/>
        <dbReference type="ChEBI" id="CHEBI:58359"/>
        <dbReference type="ChEBI" id="CHEBI:58475"/>
        <dbReference type="ChEBI" id="CHEBI:58525"/>
        <dbReference type="EC" id="4.3.2.10"/>
    </reaction>
</comment>
<comment type="pathway">
    <text evidence="1">Amino-acid biosynthesis; L-histidine biosynthesis; L-histidine from 5-phospho-alpha-D-ribose 1-diphosphate: step 5/9.</text>
</comment>
<comment type="subunit">
    <text evidence="1">Heterodimer of HisH and HisF.</text>
</comment>
<comment type="subcellular location">
    <subcellularLocation>
        <location evidence="1">Cytoplasm</location>
    </subcellularLocation>
</comment>
<comment type="similarity">
    <text evidence="1">Belongs to the HisA/HisF family.</text>
</comment>
<organism>
    <name type="scientific">Escherichia coli (strain UTI89 / UPEC)</name>
    <dbReference type="NCBI Taxonomy" id="364106"/>
    <lineage>
        <taxon>Bacteria</taxon>
        <taxon>Pseudomonadati</taxon>
        <taxon>Pseudomonadota</taxon>
        <taxon>Gammaproteobacteria</taxon>
        <taxon>Enterobacterales</taxon>
        <taxon>Enterobacteriaceae</taxon>
        <taxon>Escherichia</taxon>
    </lineage>
</organism>
<accession>Q1RA48</accession>
<name>HIS6_ECOUT</name>
<dbReference type="EC" id="4.3.2.10" evidence="1"/>
<dbReference type="EMBL" id="CP000243">
    <property type="protein sequence ID" value="ABE07766.1"/>
    <property type="molecule type" value="Genomic_DNA"/>
</dbReference>
<dbReference type="RefSeq" id="WP_000880185.1">
    <property type="nucleotide sequence ID" value="NZ_CP064825.1"/>
</dbReference>
<dbReference type="SMR" id="Q1RA48"/>
<dbReference type="KEGG" id="eci:UTI89_C2298"/>
<dbReference type="HOGENOM" id="CLU_048577_4_0_6"/>
<dbReference type="UniPathway" id="UPA00031">
    <property type="reaction ID" value="UER00010"/>
</dbReference>
<dbReference type="Proteomes" id="UP000001952">
    <property type="component" value="Chromosome"/>
</dbReference>
<dbReference type="GO" id="GO:0005737">
    <property type="term" value="C:cytoplasm"/>
    <property type="evidence" value="ECO:0007669"/>
    <property type="project" value="UniProtKB-SubCell"/>
</dbReference>
<dbReference type="GO" id="GO:0000107">
    <property type="term" value="F:imidazoleglycerol-phosphate synthase activity"/>
    <property type="evidence" value="ECO:0007669"/>
    <property type="project" value="UniProtKB-UniRule"/>
</dbReference>
<dbReference type="GO" id="GO:0016829">
    <property type="term" value="F:lyase activity"/>
    <property type="evidence" value="ECO:0007669"/>
    <property type="project" value="UniProtKB-KW"/>
</dbReference>
<dbReference type="GO" id="GO:0000105">
    <property type="term" value="P:L-histidine biosynthetic process"/>
    <property type="evidence" value="ECO:0007669"/>
    <property type="project" value="UniProtKB-UniRule"/>
</dbReference>
<dbReference type="CDD" id="cd04731">
    <property type="entry name" value="HisF"/>
    <property type="match status" value="1"/>
</dbReference>
<dbReference type="FunFam" id="3.20.20.70:FF:000006">
    <property type="entry name" value="Imidazole glycerol phosphate synthase subunit HisF"/>
    <property type="match status" value="1"/>
</dbReference>
<dbReference type="Gene3D" id="3.20.20.70">
    <property type="entry name" value="Aldolase class I"/>
    <property type="match status" value="1"/>
</dbReference>
<dbReference type="HAMAP" id="MF_01013">
    <property type="entry name" value="HisF"/>
    <property type="match status" value="1"/>
</dbReference>
<dbReference type="InterPro" id="IPR013785">
    <property type="entry name" value="Aldolase_TIM"/>
</dbReference>
<dbReference type="InterPro" id="IPR006062">
    <property type="entry name" value="His_biosynth"/>
</dbReference>
<dbReference type="InterPro" id="IPR004651">
    <property type="entry name" value="HisF"/>
</dbReference>
<dbReference type="InterPro" id="IPR050064">
    <property type="entry name" value="IGPS_HisA/HisF"/>
</dbReference>
<dbReference type="InterPro" id="IPR011060">
    <property type="entry name" value="RibuloseP-bd_barrel"/>
</dbReference>
<dbReference type="NCBIfam" id="TIGR00735">
    <property type="entry name" value="hisF"/>
    <property type="match status" value="1"/>
</dbReference>
<dbReference type="PANTHER" id="PTHR21235:SF2">
    <property type="entry name" value="IMIDAZOLE GLYCEROL PHOSPHATE SYNTHASE HISHF"/>
    <property type="match status" value="1"/>
</dbReference>
<dbReference type="PANTHER" id="PTHR21235">
    <property type="entry name" value="IMIDAZOLE GLYCEROL PHOSPHATE SYNTHASE SUBUNIT HISF/H IGP SYNTHASE SUBUNIT HISF/H"/>
    <property type="match status" value="1"/>
</dbReference>
<dbReference type="Pfam" id="PF00977">
    <property type="entry name" value="His_biosynth"/>
    <property type="match status" value="1"/>
</dbReference>
<dbReference type="SUPFAM" id="SSF51366">
    <property type="entry name" value="Ribulose-phoshate binding barrel"/>
    <property type="match status" value="1"/>
</dbReference>
<proteinExistence type="inferred from homology"/>
<evidence type="ECO:0000255" key="1">
    <source>
        <dbReference type="HAMAP-Rule" id="MF_01013"/>
    </source>
</evidence>
<keyword id="KW-0028">Amino-acid biosynthesis</keyword>
<keyword id="KW-0963">Cytoplasm</keyword>
<keyword id="KW-0368">Histidine biosynthesis</keyword>
<keyword id="KW-0456">Lyase</keyword>